<keyword id="KW-0150">Chloroplast</keyword>
<keyword id="KW-0547">Nucleotide-binding</keyword>
<keyword id="KW-0934">Plastid</keyword>
<keyword id="KW-1185">Reference proteome</keyword>
<keyword id="KW-0677">Repeat</keyword>
<keyword id="KW-0694">RNA-binding</keyword>
<keyword id="KW-0809">Transit peptide</keyword>
<proteinExistence type="evidence at transcript level"/>
<comment type="function">
    <text evidence="3 4">Involved in the processing of polycistronic chloroplast psbB-psbT-psbH-petB-petD transcript. Could bind RNA.</text>
</comment>
<comment type="subcellular location">
    <subcellularLocation>
        <location evidence="4">Plastid</location>
        <location evidence="4">Chloroplast stroma</location>
    </subcellularLocation>
</comment>
<comment type="similarity">
    <text evidence="5">Belongs to the PPR family. P subfamily.</text>
</comment>
<comment type="online information" name="Pentatricopeptide repeat proteins">
    <link uri="https://ppr.plantenergy.uwa.edu.au"/>
</comment>
<organism>
    <name type="scientific">Arabidopsis thaliana</name>
    <name type="common">Mouse-ear cress</name>
    <dbReference type="NCBI Taxonomy" id="3702"/>
    <lineage>
        <taxon>Eukaryota</taxon>
        <taxon>Viridiplantae</taxon>
        <taxon>Streptophyta</taxon>
        <taxon>Embryophyta</taxon>
        <taxon>Tracheophyta</taxon>
        <taxon>Spermatophyta</taxon>
        <taxon>Magnoliopsida</taxon>
        <taxon>eudicotyledons</taxon>
        <taxon>Gunneridae</taxon>
        <taxon>Pentapetalae</taxon>
        <taxon>rosids</taxon>
        <taxon>malvids</taxon>
        <taxon>Brassicales</taxon>
        <taxon>Brassicaceae</taxon>
        <taxon>Camelineae</taxon>
        <taxon>Arabidopsis</taxon>
    </lineage>
</organism>
<feature type="transit peptide" description="Chloroplast" evidence="1">
    <location>
        <begin position="1"/>
        <end position="65"/>
    </location>
</feature>
<feature type="chain" id="PRO_0000356081" description="Pentatricopeptide repeat-containing protein At3g09650, chloroplastic">
    <location>
        <begin position="66"/>
        <end position="778"/>
    </location>
</feature>
<feature type="repeat" description="PPR 1">
    <location>
        <begin position="235"/>
        <end position="269"/>
    </location>
</feature>
<feature type="repeat" description="PPR 2">
    <location>
        <begin position="270"/>
        <end position="304"/>
    </location>
</feature>
<feature type="repeat" description="PPR 3">
    <location>
        <begin position="305"/>
        <end position="339"/>
    </location>
</feature>
<feature type="repeat" description="PPR 4">
    <location>
        <begin position="413"/>
        <end position="443"/>
    </location>
</feature>
<feature type="repeat" description="PPR 5">
    <location>
        <begin position="451"/>
        <end position="485"/>
    </location>
</feature>
<feature type="repeat" description="PPR 6">
    <location>
        <begin position="486"/>
        <end position="521"/>
    </location>
</feature>
<feature type="repeat" description="PPR 7">
    <location>
        <begin position="522"/>
        <end position="556"/>
    </location>
</feature>
<feature type="repeat" description="PPR 8">
    <location>
        <begin position="557"/>
        <end position="587"/>
    </location>
</feature>
<feature type="repeat" description="PPR 9">
    <location>
        <begin position="593"/>
        <end position="627"/>
    </location>
</feature>
<feature type="repeat" description="PPR 10">
    <location>
        <begin position="628"/>
        <end position="658"/>
    </location>
</feature>
<feature type="region of interest" description="Disordered" evidence="2">
    <location>
        <begin position="351"/>
        <end position="381"/>
    </location>
</feature>
<feature type="compositionally biased region" description="Acidic residues" evidence="2">
    <location>
        <begin position="355"/>
        <end position="372"/>
    </location>
</feature>
<feature type="sequence conflict" description="In Ref. 3; BAD95223." evidence="5" ref="3">
    <original>Y</original>
    <variation>C</variation>
    <location>
        <position position="184"/>
    </location>
</feature>
<feature type="sequence conflict" description="In Ref. 3; BAD95223." evidence="5" ref="3">
    <original>D</original>
    <variation>N</variation>
    <location>
        <position position="204"/>
    </location>
</feature>
<evidence type="ECO:0000255" key="1"/>
<evidence type="ECO:0000256" key="2">
    <source>
        <dbReference type="SAM" id="MobiDB-lite"/>
    </source>
</evidence>
<evidence type="ECO:0000269" key="3">
    <source>
    </source>
</evidence>
<evidence type="ECO:0000269" key="4">
    <source>
    </source>
</evidence>
<evidence type="ECO:0000305" key="5"/>
<accession>Q9SF38</accession>
<accession>Q56XQ4</accession>
<protein>
    <recommendedName>
        <fullName>Pentatricopeptide repeat-containing protein At3g09650, chloroplastic</fullName>
    </recommendedName>
    <alternativeName>
        <fullName>Protein HIGH CHLOROPHYLL FLUORESCENCE 152</fullName>
    </alternativeName>
</protein>
<reference key="1">
    <citation type="journal article" date="2000" name="Nature">
        <title>Sequence and analysis of chromosome 3 of the plant Arabidopsis thaliana.</title>
        <authorList>
            <person name="Salanoubat M."/>
            <person name="Lemcke K."/>
            <person name="Rieger M."/>
            <person name="Ansorge W."/>
            <person name="Unseld M."/>
            <person name="Fartmann B."/>
            <person name="Valle G."/>
            <person name="Bloecker H."/>
            <person name="Perez-Alonso M."/>
            <person name="Obermaier B."/>
            <person name="Delseny M."/>
            <person name="Boutry M."/>
            <person name="Grivell L.A."/>
            <person name="Mache R."/>
            <person name="Puigdomenech P."/>
            <person name="De Simone V."/>
            <person name="Choisne N."/>
            <person name="Artiguenave F."/>
            <person name="Robert C."/>
            <person name="Brottier P."/>
            <person name="Wincker P."/>
            <person name="Cattolico L."/>
            <person name="Weissenbach J."/>
            <person name="Saurin W."/>
            <person name="Quetier F."/>
            <person name="Schaefer M."/>
            <person name="Mueller-Auer S."/>
            <person name="Gabel C."/>
            <person name="Fuchs M."/>
            <person name="Benes V."/>
            <person name="Wurmbach E."/>
            <person name="Drzonek H."/>
            <person name="Erfle H."/>
            <person name="Jordan N."/>
            <person name="Bangert S."/>
            <person name="Wiedelmann R."/>
            <person name="Kranz H."/>
            <person name="Voss H."/>
            <person name="Holland R."/>
            <person name="Brandt P."/>
            <person name="Nyakatura G."/>
            <person name="Vezzi A."/>
            <person name="D'Angelo M."/>
            <person name="Pallavicini A."/>
            <person name="Toppo S."/>
            <person name="Simionati B."/>
            <person name="Conrad A."/>
            <person name="Hornischer K."/>
            <person name="Kauer G."/>
            <person name="Loehnert T.-H."/>
            <person name="Nordsiek G."/>
            <person name="Reichelt J."/>
            <person name="Scharfe M."/>
            <person name="Schoen O."/>
            <person name="Bargues M."/>
            <person name="Terol J."/>
            <person name="Climent J."/>
            <person name="Navarro P."/>
            <person name="Collado C."/>
            <person name="Perez-Perez A."/>
            <person name="Ottenwaelder B."/>
            <person name="Duchemin D."/>
            <person name="Cooke R."/>
            <person name="Laudie M."/>
            <person name="Berger-Llauro C."/>
            <person name="Purnelle B."/>
            <person name="Masuy D."/>
            <person name="de Haan M."/>
            <person name="Maarse A.C."/>
            <person name="Alcaraz J.-P."/>
            <person name="Cottet A."/>
            <person name="Casacuberta E."/>
            <person name="Monfort A."/>
            <person name="Argiriou A."/>
            <person name="Flores M."/>
            <person name="Liguori R."/>
            <person name="Vitale D."/>
            <person name="Mannhaupt G."/>
            <person name="Haase D."/>
            <person name="Schoof H."/>
            <person name="Rudd S."/>
            <person name="Zaccaria P."/>
            <person name="Mewes H.-W."/>
            <person name="Mayer K.F.X."/>
            <person name="Kaul S."/>
            <person name="Town C.D."/>
            <person name="Koo H.L."/>
            <person name="Tallon L.J."/>
            <person name="Jenkins J."/>
            <person name="Rooney T."/>
            <person name="Rizzo M."/>
            <person name="Walts A."/>
            <person name="Utterback T."/>
            <person name="Fujii C.Y."/>
            <person name="Shea T.P."/>
            <person name="Creasy T.H."/>
            <person name="Haas B."/>
            <person name="Maiti R."/>
            <person name="Wu D."/>
            <person name="Peterson J."/>
            <person name="Van Aken S."/>
            <person name="Pai G."/>
            <person name="Militscher J."/>
            <person name="Sellers P."/>
            <person name="Gill J.E."/>
            <person name="Feldblyum T.V."/>
            <person name="Preuss D."/>
            <person name="Lin X."/>
            <person name="Nierman W.C."/>
            <person name="Salzberg S.L."/>
            <person name="White O."/>
            <person name="Venter J.C."/>
            <person name="Fraser C.M."/>
            <person name="Kaneko T."/>
            <person name="Nakamura Y."/>
            <person name="Sato S."/>
            <person name="Kato T."/>
            <person name="Asamizu E."/>
            <person name="Sasamoto S."/>
            <person name="Kimura T."/>
            <person name="Idesawa K."/>
            <person name="Kawashima K."/>
            <person name="Kishida Y."/>
            <person name="Kiyokawa C."/>
            <person name="Kohara M."/>
            <person name="Matsumoto M."/>
            <person name="Matsuno A."/>
            <person name="Muraki A."/>
            <person name="Nakayama S."/>
            <person name="Nakazaki N."/>
            <person name="Shinpo S."/>
            <person name="Takeuchi C."/>
            <person name="Wada T."/>
            <person name="Watanabe A."/>
            <person name="Yamada M."/>
            <person name="Yasuda M."/>
            <person name="Tabata S."/>
        </authorList>
    </citation>
    <scope>NUCLEOTIDE SEQUENCE [LARGE SCALE GENOMIC DNA]</scope>
    <source>
        <strain>cv. Columbia</strain>
    </source>
</reference>
<reference key="2">
    <citation type="journal article" date="2017" name="Plant J.">
        <title>Araport11: a complete reannotation of the Arabidopsis thaliana reference genome.</title>
        <authorList>
            <person name="Cheng C.Y."/>
            <person name="Krishnakumar V."/>
            <person name="Chan A.P."/>
            <person name="Thibaud-Nissen F."/>
            <person name="Schobel S."/>
            <person name="Town C.D."/>
        </authorList>
    </citation>
    <scope>GENOME REANNOTATION</scope>
    <source>
        <strain>cv. Columbia</strain>
    </source>
</reference>
<reference key="3">
    <citation type="submission" date="2005-03" db="EMBL/GenBank/DDBJ databases">
        <title>Large-scale analysis of RIKEN Arabidopsis full-length (RAFL) cDNAs.</title>
        <authorList>
            <person name="Totoki Y."/>
            <person name="Seki M."/>
            <person name="Ishida J."/>
            <person name="Nakajima M."/>
            <person name="Enju A."/>
            <person name="Kamiya A."/>
            <person name="Narusaka M."/>
            <person name="Shin-i T."/>
            <person name="Nakagawa M."/>
            <person name="Sakamoto N."/>
            <person name="Oishi K."/>
            <person name="Kohara Y."/>
            <person name="Kobayashi M."/>
            <person name="Toyoda A."/>
            <person name="Sakaki Y."/>
            <person name="Sakurai T."/>
            <person name="Iida K."/>
            <person name="Akiyama K."/>
            <person name="Satou M."/>
            <person name="Toyoda T."/>
            <person name="Konagaya A."/>
            <person name="Carninci P."/>
            <person name="Kawai J."/>
            <person name="Hayashizaki Y."/>
            <person name="Shinozaki K."/>
        </authorList>
    </citation>
    <scope>NUCLEOTIDE SEQUENCE [LARGE SCALE MRNA]</scope>
    <source>
        <strain>cv. Columbia</strain>
    </source>
</reference>
<reference key="4">
    <citation type="journal article" date="2001" name="Plant Cell">
        <title>The nucleus-encoded HCF107 gene of Arabidopsis provides a link between intercistronic RNA processing and the accumulation of translation-competent psbH transcripts in chloroplasts.</title>
        <authorList>
            <person name="Felder S."/>
            <person name="Meierhoff K."/>
            <person name="Sane A.P."/>
            <person name="Meurer J."/>
            <person name="Driemel C."/>
            <person name="Pluecken H."/>
            <person name="Klaff P."/>
            <person name="Stein B."/>
            <person name="Bechtold N."/>
            <person name="Westhoff P."/>
        </authorList>
    </citation>
    <scope>FUNCTION</scope>
</reference>
<reference key="5">
    <citation type="journal article" date="2003" name="Plant Cell">
        <title>HCF152, an Arabidopsis RNA binding pentatricopeptide repeat protein involved in the processing of chloroplast psbB-psbT-psbH-petB-petD RNAs.</title>
        <authorList>
            <person name="Meierhoff K."/>
            <person name="Felder S."/>
            <person name="Nakamura T."/>
            <person name="Bechtold N."/>
            <person name="Schuster G."/>
        </authorList>
    </citation>
    <scope>FUNCTION</scope>
    <scope>SUBCELLULAR LOCATION</scope>
</reference>
<reference key="6">
    <citation type="journal article" date="2004" name="Plant Cell">
        <title>Genome-wide analysis of Arabidopsis pentatricopeptide repeat proteins reveals their essential role in organelle biogenesis.</title>
        <authorList>
            <person name="Lurin C."/>
            <person name="Andres C."/>
            <person name="Aubourg S."/>
            <person name="Bellaoui M."/>
            <person name="Bitton F."/>
            <person name="Bruyere C."/>
            <person name="Caboche M."/>
            <person name="Debast C."/>
            <person name="Gualberto J."/>
            <person name="Hoffmann B."/>
            <person name="Lecharny A."/>
            <person name="Le Ret M."/>
            <person name="Martin-Magniette M.-L."/>
            <person name="Mireau H."/>
            <person name="Peeters N."/>
            <person name="Renou J.-P."/>
            <person name="Szurek B."/>
            <person name="Taconnat L."/>
            <person name="Small I."/>
        </authorList>
    </citation>
    <scope>GENE FAMILY</scope>
</reference>
<sequence length="778" mass="86961">MNILRPPTSSSSSSFPPYPKPVSLTPPVSFTLIHNPINLCSINPPFTNAGRPIFQRSASGTANSSAEDLSSFLGSPSEAYSTHNDQELLFLLRNRKTDEAWAKYVQSTHLPGPTCLSRLVSQLSYQSKPESLTRAQSILTRLRNERQLHRLDANSLGLLAMAAAKSGQTLYAVSVIKSMIRSGYLPHVKAWTAAVASLSASGDDGPEESIKLFIAITRRVKRFGDQSLVGQSRPDTAAFNAVLNACANLGDTDKYWKLFEEMSEWDCEPDVLTYNVMIKLCARVGRKELIVFVLERIIDKGIKVCMTTMHSLVAAYVGFGDLRTAERIVQAMREKRRDLCKVLRECNAEDLKEKEEEEAEDDEDAFEDDEDSGYSARDEVSEEGVVDVFKKLLPNSVDPSGEPPLLPKVFAPDSRIYTTLMKGYMKNGRVADTARMLEAMRRQDDRNSHPDEVTYTTVVSAFVNAGLMDRARQVLAEMARMGVPANRITYNVLLKGYCKQLQIDRAEDLLREMTEDAGIEPDVVSYNIIIDGCILIDDSAGALAFFNEMRTRGIAPTKISYTTLMKAFAMSGQPKLANRVFDEMMNDPRVKVDLIAWNMLVEGYCRLGLIEDAQRVVSRMKENGFYPNVATYGSLANGVSQARKPGDALLLWKEIKERCAVKKKEAPSDSSSDPAPPMLKPDEGLLDTLADICVRAAFFKKALEIIACMEENGIPPNKTKYKKIYVEMHSRMFTSKHASQARIDRRVERKRAAEAFKFWLGLPNSYYGSEWKLGPRED</sequence>
<dbReference type="EMBL" id="AC016661">
    <property type="protein sequence ID" value="AAF23295.1"/>
    <property type="molecule type" value="Genomic_DNA"/>
</dbReference>
<dbReference type="EMBL" id="CP002686">
    <property type="protein sequence ID" value="AEE74793.1"/>
    <property type="molecule type" value="Genomic_DNA"/>
</dbReference>
<dbReference type="EMBL" id="AK221619">
    <property type="protein sequence ID" value="BAD95223.1"/>
    <property type="molecule type" value="mRNA"/>
</dbReference>
<dbReference type="RefSeq" id="NP_187576.1">
    <property type="nucleotide sequence ID" value="NM_111799.4"/>
</dbReference>
<dbReference type="SMR" id="Q9SF38"/>
<dbReference type="BioGRID" id="5456">
    <property type="interactions" value="3"/>
</dbReference>
<dbReference type="FunCoup" id="Q9SF38">
    <property type="interactions" value="488"/>
</dbReference>
<dbReference type="STRING" id="3702.Q9SF38"/>
<dbReference type="PaxDb" id="3702-AT3G09650.1"/>
<dbReference type="ProteomicsDB" id="248945"/>
<dbReference type="EnsemblPlants" id="AT3G09650.1">
    <property type="protein sequence ID" value="AT3G09650.1"/>
    <property type="gene ID" value="AT3G09650"/>
</dbReference>
<dbReference type="GeneID" id="820122"/>
<dbReference type="Gramene" id="AT3G09650.1">
    <property type="protein sequence ID" value="AT3G09650.1"/>
    <property type="gene ID" value="AT3G09650"/>
</dbReference>
<dbReference type="KEGG" id="ath:AT3G09650"/>
<dbReference type="Araport" id="AT3G09650"/>
<dbReference type="TAIR" id="AT3G09650">
    <property type="gene designation" value="HCF152"/>
</dbReference>
<dbReference type="eggNOG" id="KOG4197">
    <property type="taxonomic scope" value="Eukaryota"/>
</dbReference>
<dbReference type="HOGENOM" id="CLU_022641_0_0_1"/>
<dbReference type="InParanoid" id="Q9SF38"/>
<dbReference type="OMA" id="VCQLSYQ"/>
<dbReference type="OrthoDB" id="185373at2759"/>
<dbReference type="PhylomeDB" id="Q9SF38"/>
<dbReference type="PRO" id="PR:Q9SF38"/>
<dbReference type="Proteomes" id="UP000006548">
    <property type="component" value="Chromosome 3"/>
</dbReference>
<dbReference type="ExpressionAtlas" id="Q9SF38">
    <property type="expression patterns" value="baseline and differential"/>
</dbReference>
<dbReference type="GO" id="GO:0009570">
    <property type="term" value="C:chloroplast stroma"/>
    <property type="evidence" value="ECO:0000314"/>
    <property type="project" value="TAIR"/>
</dbReference>
<dbReference type="GO" id="GO:0003729">
    <property type="term" value="F:mRNA binding"/>
    <property type="evidence" value="ECO:0000314"/>
    <property type="project" value="TAIR"/>
</dbReference>
<dbReference type="GO" id="GO:0000166">
    <property type="term" value="F:nucleotide binding"/>
    <property type="evidence" value="ECO:0007669"/>
    <property type="project" value="UniProtKB-KW"/>
</dbReference>
<dbReference type="GO" id="GO:0006397">
    <property type="term" value="P:mRNA processing"/>
    <property type="evidence" value="ECO:0000315"/>
    <property type="project" value="TAIR"/>
</dbReference>
<dbReference type="FunFam" id="1.25.40.10:FF:002392">
    <property type="entry name" value="Pentatricopeptide repeat-containing protein At3g09650, chloroplastic"/>
    <property type="match status" value="1"/>
</dbReference>
<dbReference type="Gene3D" id="1.25.40.10">
    <property type="entry name" value="Tetratricopeptide repeat domain"/>
    <property type="match status" value="5"/>
</dbReference>
<dbReference type="InterPro" id="IPR002885">
    <property type="entry name" value="Pentatricopeptide_rpt"/>
</dbReference>
<dbReference type="InterPro" id="IPR011990">
    <property type="entry name" value="TPR-like_helical_dom_sf"/>
</dbReference>
<dbReference type="NCBIfam" id="TIGR00756">
    <property type="entry name" value="PPR"/>
    <property type="match status" value="7"/>
</dbReference>
<dbReference type="PANTHER" id="PTHR46598">
    <property type="entry name" value="BNAC05G43320D PROTEIN"/>
    <property type="match status" value="1"/>
</dbReference>
<dbReference type="PANTHER" id="PTHR46598:SF5">
    <property type="entry name" value="PENTACOTRIPEPTIDE-REPEAT REGION OF PRORP DOMAIN-CONTAINING PROTEIN"/>
    <property type="match status" value="1"/>
</dbReference>
<dbReference type="Pfam" id="PF01535">
    <property type="entry name" value="PPR"/>
    <property type="match status" value="2"/>
</dbReference>
<dbReference type="Pfam" id="PF12854">
    <property type="entry name" value="PPR_1"/>
    <property type="match status" value="1"/>
</dbReference>
<dbReference type="Pfam" id="PF13041">
    <property type="entry name" value="PPR_2"/>
    <property type="match status" value="3"/>
</dbReference>
<dbReference type="Pfam" id="PF13812">
    <property type="entry name" value="PPR_3"/>
    <property type="match status" value="1"/>
</dbReference>
<dbReference type="PROSITE" id="PS51375">
    <property type="entry name" value="PPR"/>
    <property type="match status" value="12"/>
</dbReference>
<name>PP222_ARATH</name>
<gene>
    <name type="primary">HCF152</name>
    <name type="synonym">CRM3</name>
    <name type="ordered locus">At3g09650</name>
    <name type="ORF">F11F8_24</name>
</gene>